<proteinExistence type="evidence at protein level"/>
<accession>O43474</accession>
<accession>B2R8S4</accession>
<accession>B3KT79</accession>
<accession>L0R3I6</accession>
<accession>L0R4N5</accession>
<accession>P78338</accession>
<accession>Q5T3J8</accession>
<accession>Q5T3J9</accession>
<accession>Q8N717</accession>
<accession>Q9UNP3</accession>
<protein>
    <recommendedName>
        <fullName>Krueppel-like factor 4</fullName>
    </recommendedName>
    <alternativeName>
        <fullName>Epithelial zinc finger protein EZF</fullName>
    </alternativeName>
    <alternativeName>
        <fullName>Gut-enriched krueppel-like factor</fullName>
    </alternativeName>
</protein>
<dbReference type="EMBL" id="AF022184">
    <property type="protein sequence ID" value="AAC03462.1"/>
    <property type="status" value="ALT_INIT"/>
    <property type="molecule type" value="mRNA"/>
</dbReference>
<dbReference type="EMBL" id="AF105036">
    <property type="protein sequence ID" value="AAD42165.1"/>
    <property type="status" value="ALT_INIT"/>
    <property type="molecule type" value="mRNA"/>
</dbReference>
<dbReference type="EMBL" id="HF546201">
    <property type="protein sequence ID" value="CCO02787.1"/>
    <property type="molecule type" value="mRNA"/>
</dbReference>
<dbReference type="EMBL" id="HF546202">
    <property type="protein sequence ID" value="CCO02788.1"/>
    <property type="molecule type" value="mRNA"/>
</dbReference>
<dbReference type="EMBL" id="U70663">
    <property type="protein sequence ID" value="AAB48399.1"/>
    <property type="status" value="ALT_INIT"/>
    <property type="molecule type" value="mRNA"/>
</dbReference>
<dbReference type="EMBL" id="AK095134">
    <property type="protein sequence ID" value="BAG52991.1"/>
    <property type="molecule type" value="mRNA"/>
</dbReference>
<dbReference type="EMBL" id="AK313489">
    <property type="protein sequence ID" value="BAG36271.1"/>
    <property type="status" value="ALT_INIT"/>
    <property type="molecule type" value="mRNA"/>
</dbReference>
<dbReference type="EMBL" id="DQ658241">
    <property type="protein sequence ID" value="ABG25917.1"/>
    <property type="status" value="ALT_SEQ"/>
    <property type="molecule type" value="Genomic_DNA"/>
</dbReference>
<dbReference type="EMBL" id="AL360218">
    <property type="status" value="NOT_ANNOTATED_CDS"/>
    <property type="molecule type" value="Genomic_DNA"/>
</dbReference>
<dbReference type="EMBL" id="CH471105">
    <property type="protein sequence ID" value="EAW59020.1"/>
    <property type="status" value="ALT_SEQ"/>
    <property type="molecule type" value="Genomic_DNA"/>
</dbReference>
<dbReference type="EMBL" id="CH471105">
    <property type="protein sequence ID" value="EAW59021.1"/>
    <property type="status" value="ALT_SEQ"/>
    <property type="molecule type" value="Genomic_DNA"/>
</dbReference>
<dbReference type="EMBL" id="BC029923">
    <property type="protein sequence ID" value="AAH29923.1"/>
    <property type="status" value="ALT_INIT"/>
    <property type="molecule type" value="mRNA"/>
</dbReference>
<dbReference type="EMBL" id="BC030811">
    <property type="protein sequence ID" value="AAH30811.1"/>
    <property type="status" value="ALT_INIT"/>
    <property type="molecule type" value="mRNA"/>
</dbReference>
<dbReference type="CCDS" id="CCDS6770.2">
    <molecule id="O43474-1"/>
</dbReference>
<dbReference type="RefSeq" id="NP_001300981.1">
    <molecule id="O43474-3"/>
    <property type="nucleotide sequence ID" value="NM_001314052.2"/>
</dbReference>
<dbReference type="RefSeq" id="NP_004226.3">
    <molecule id="O43474-1"/>
    <property type="nucleotide sequence ID" value="NM_004235.5"/>
</dbReference>
<dbReference type="PDB" id="6VTX">
    <property type="method" value="X-ray"/>
    <property type="resolution" value="2.14 A"/>
    <property type="chains" value="A=430-513"/>
</dbReference>
<dbReference type="PDBsum" id="6VTX"/>
<dbReference type="SMR" id="O43474"/>
<dbReference type="BioGRID" id="114726">
    <property type="interactions" value="158"/>
</dbReference>
<dbReference type="DIP" id="DIP-57667N"/>
<dbReference type="FunCoup" id="O43474">
    <property type="interactions" value="1324"/>
</dbReference>
<dbReference type="IntAct" id="O43474">
    <property type="interactions" value="116"/>
</dbReference>
<dbReference type="MINT" id="O43474"/>
<dbReference type="STRING" id="9606.ENSP00000363804"/>
<dbReference type="DrugBank" id="DB17143">
    <property type="generic name" value="APTO-253"/>
</dbReference>
<dbReference type="GlyCosmos" id="O43474">
    <property type="glycosylation" value="1 site, 1 glycan"/>
</dbReference>
<dbReference type="GlyGen" id="O43474">
    <property type="glycosylation" value="2 sites, 1 O-linked glycan (1 site)"/>
</dbReference>
<dbReference type="iPTMnet" id="O43474"/>
<dbReference type="PhosphoSitePlus" id="O43474"/>
<dbReference type="BioMuta" id="KLF4"/>
<dbReference type="jPOST" id="O43474"/>
<dbReference type="MassIVE" id="O43474"/>
<dbReference type="PaxDb" id="9606-ENSP00000363804"/>
<dbReference type="PeptideAtlas" id="O43474"/>
<dbReference type="ProteomicsDB" id="48962">
    <molecule id="O43474-3"/>
</dbReference>
<dbReference type="ProteomicsDB" id="48963">
    <molecule id="O43474-1"/>
</dbReference>
<dbReference type="ProteomicsDB" id="48964">
    <molecule id="O43474-4"/>
</dbReference>
<dbReference type="Pumba" id="O43474"/>
<dbReference type="Antibodypedia" id="14888">
    <property type="antibodies" value="925 antibodies from 44 providers"/>
</dbReference>
<dbReference type="DNASU" id="9314"/>
<dbReference type="Ensembl" id="ENST00000374672.5">
    <molecule id="O43474-1"/>
    <property type="protein sequence ID" value="ENSP00000363804.4"/>
    <property type="gene ID" value="ENSG00000136826.15"/>
</dbReference>
<dbReference type="GeneID" id="9314"/>
<dbReference type="KEGG" id="hsa:9314"/>
<dbReference type="MANE-Select" id="ENST00000374672.5">
    <molecule id="O43474-1"/>
    <property type="protein sequence ID" value="ENSP00000363804.4"/>
    <property type="RefSeq nucleotide sequence ID" value="NM_004235.6"/>
    <property type="RefSeq protein sequence ID" value="NP_004226.3"/>
</dbReference>
<dbReference type="UCSC" id="uc004bdg.4">
    <molecule id="O43474-3"/>
    <property type="organism name" value="human"/>
</dbReference>
<dbReference type="AGR" id="HGNC:6348"/>
<dbReference type="CTD" id="9314"/>
<dbReference type="DisGeNET" id="9314"/>
<dbReference type="GeneCards" id="KLF4"/>
<dbReference type="HGNC" id="HGNC:6348">
    <property type="gene designation" value="KLF4"/>
</dbReference>
<dbReference type="HPA" id="ENSG00000136826">
    <property type="expression patterns" value="Tissue enhanced (skin)"/>
</dbReference>
<dbReference type="MalaCards" id="KLF4"/>
<dbReference type="MIM" id="602253">
    <property type="type" value="gene"/>
</dbReference>
<dbReference type="neXtProt" id="NX_O43474"/>
<dbReference type="OpenTargets" id="ENSG00000136826"/>
<dbReference type="PharmGKB" id="PA30138"/>
<dbReference type="VEuPathDB" id="HostDB:ENSG00000136826"/>
<dbReference type="eggNOG" id="KOG1721">
    <property type="taxonomic scope" value="Eukaryota"/>
</dbReference>
<dbReference type="GeneTree" id="ENSGT00940000156229"/>
<dbReference type="HOGENOM" id="CLU_002678_33_1_1"/>
<dbReference type="InParanoid" id="O43474"/>
<dbReference type="OMA" id="LSTRDCH"/>
<dbReference type="OrthoDB" id="4748970at2759"/>
<dbReference type="PAN-GO" id="O43474">
    <property type="GO annotations" value="3 GO annotations based on evolutionary models"/>
</dbReference>
<dbReference type="PhylomeDB" id="O43474"/>
<dbReference type="TreeFam" id="TF350556"/>
<dbReference type="PathwayCommons" id="O43474"/>
<dbReference type="Reactome" id="R-HSA-381340">
    <property type="pathway name" value="Transcriptional regulation of white adipocyte differentiation"/>
</dbReference>
<dbReference type="Reactome" id="R-HSA-422085">
    <property type="pathway name" value="Synthesis, secretion, and deacylation of Ghrelin"/>
</dbReference>
<dbReference type="Reactome" id="R-HSA-452723">
    <property type="pathway name" value="Transcriptional regulation of pluripotent stem cells"/>
</dbReference>
<dbReference type="Reactome" id="R-HSA-9617828">
    <property type="pathway name" value="FOXO-mediated transcription of cell cycle genes"/>
</dbReference>
<dbReference type="SignaLink" id="O43474"/>
<dbReference type="SIGNOR" id="O43474"/>
<dbReference type="BioGRID-ORCS" id="9314">
    <property type="hits" value="21 hits in 1177 CRISPR screens"/>
</dbReference>
<dbReference type="CD-CODE" id="1A18FFC4">
    <property type="entry name" value="Paraspeckle"/>
</dbReference>
<dbReference type="ChiTaRS" id="KLF4">
    <property type="organism name" value="human"/>
</dbReference>
<dbReference type="GeneWiki" id="KLF4"/>
<dbReference type="GenomeRNAi" id="9314"/>
<dbReference type="Pharos" id="O43474">
    <property type="development level" value="Tbio"/>
</dbReference>
<dbReference type="PRO" id="PR:O43474"/>
<dbReference type="Proteomes" id="UP000005640">
    <property type="component" value="Chromosome 9"/>
</dbReference>
<dbReference type="RNAct" id="O43474">
    <property type="molecule type" value="protein"/>
</dbReference>
<dbReference type="Bgee" id="ENSG00000136826">
    <property type="expression patterns" value="Expressed in upper leg skin and 201 other cell types or tissues"/>
</dbReference>
<dbReference type="ExpressionAtlas" id="O43474">
    <property type="expression patterns" value="baseline and differential"/>
</dbReference>
<dbReference type="GO" id="GO:0000785">
    <property type="term" value="C:chromatin"/>
    <property type="evidence" value="ECO:0000314"/>
    <property type="project" value="BHF-UCL"/>
</dbReference>
<dbReference type="GO" id="GO:0005829">
    <property type="term" value="C:cytosol"/>
    <property type="evidence" value="ECO:0000314"/>
    <property type="project" value="HPA"/>
</dbReference>
<dbReference type="GO" id="GO:0000791">
    <property type="term" value="C:euchromatin"/>
    <property type="evidence" value="ECO:0007669"/>
    <property type="project" value="Ensembl"/>
</dbReference>
<dbReference type="GO" id="GO:0015630">
    <property type="term" value="C:microtubule cytoskeleton"/>
    <property type="evidence" value="ECO:0000314"/>
    <property type="project" value="HPA"/>
</dbReference>
<dbReference type="GO" id="GO:0005654">
    <property type="term" value="C:nucleoplasm"/>
    <property type="evidence" value="ECO:0000314"/>
    <property type="project" value="HPA"/>
</dbReference>
<dbReference type="GO" id="GO:0005667">
    <property type="term" value="C:transcription regulator complex"/>
    <property type="evidence" value="ECO:0007669"/>
    <property type="project" value="Ensembl"/>
</dbReference>
<dbReference type="GO" id="GO:0008013">
    <property type="term" value="F:beta-catenin binding"/>
    <property type="evidence" value="ECO:0007669"/>
    <property type="project" value="Ensembl"/>
</dbReference>
<dbReference type="GO" id="GO:0031490">
    <property type="term" value="F:chromatin DNA binding"/>
    <property type="evidence" value="ECO:0007669"/>
    <property type="project" value="Ensembl"/>
</dbReference>
<dbReference type="GO" id="GO:0001228">
    <property type="term" value="F:DNA-binding transcription activator activity, RNA polymerase II-specific"/>
    <property type="evidence" value="ECO:0000315"/>
    <property type="project" value="BHF-UCL"/>
</dbReference>
<dbReference type="GO" id="GO:0003700">
    <property type="term" value="F:DNA-binding transcription factor activity"/>
    <property type="evidence" value="ECO:0000314"/>
    <property type="project" value="BHF-UCL"/>
</dbReference>
<dbReference type="GO" id="GO:0000981">
    <property type="term" value="F:DNA-binding transcription factor activity, RNA polymerase II-specific"/>
    <property type="evidence" value="ECO:0000247"/>
    <property type="project" value="NTNU_SB"/>
</dbReference>
<dbReference type="GO" id="GO:0042826">
    <property type="term" value="F:histone deacetylase binding"/>
    <property type="evidence" value="ECO:0007669"/>
    <property type="project" value="Ensembl"/>
</dbReference>
<dbReference type="GO" id="GO:0106222">
    <property type="term" value="F:lncRNA binding"/>
    <property type="evidence" value="ECO:0007669"/>
    <property type="project" value="Ensembl"/>
</dbReference>
<dbReference type="GO" id="GO:0035014">
    <property type="term" value="F:phosphatidylinositol 3-kinase regulator activity"/>
    <property type="evidence" value="ECO:0007669"/>
    <property type="project" value="Ensembl"/>
</dbReference>
<dbReference type="GO" id="GO:1990841">
    <property type="term" value="F:promoter-specific chromatin binding"/>
    <property type="evidence" value="ECO:0000314"/>
    <property type="project" value="UniProtKB"/>
</dbReference>
<dbReference type="GO" id="GO:0000978">
    <property type="term" value="F:RNA polymerase II cis-regulatory region sequence-specific DNA binding"/>
    <property type="evidence" value="ECO:0000314"/>
    <property type="project" value="BHF-UCL"/>
</dbReference>
<dbReference type="GO" id="GO:0001010">
    <property type="term" value="F:RNA polymerase II sequence-specific DNA-binding transcription factor recruiting activity"/>
    <property type="evidence" value="ECO:0000250"/>
    <property type="project" value="BHF-UCL"/>
</dbReference>
<dbReference type="GO" id="GO:0061629">
    <property type="term" value="F:RNA polymerase II-specific DNA-binding transcription factor binding"/>
    <property type="evidence" value="ECO:0000353"/>
    <property type="project" value="BHF-UCL"/>
</dbReference>
<dbReference type="GO" id="GO:1990837">
    <property type="term" value="F:sequence-specific double-stranded DNA binding"/>
    <property type="evidence" value="ECO:0000314"/>
    <property type="project" value="ARUK-UCL"/>
</dbReference>
<dbReference type="GO" id="GO:0000976">
    <property type="term" value="F:transcription cis-regulatory region binding"/>
    <property type="evidence" value="ECO:0000250"/>
    <property type="project" value="UniProtKB"/>
</dbReference>
<dbReference type="GO" id="GO:0001221">
    <property type="term" value="F:transcription coregulator binding"/>
    <property type="evidence" value="ECO:0007669"/>
    <property type="project" value="Ensembl"/>
</dbReference>
<dbReference type="GO" id="GO:0008270">
    <property type="term" value="F:zinc ion binding"/>
    <property type="evidence" value="ECO:0000303"/>
    <property type="project" value="UniProtKB"/>
</dbReference>
<dbReference type="GO" id="GO:0060070">
    <property type="term" value="P:canonical Wnt signaling pathway"/>
    <property type="evidence" value="ECO:0007669"/>
    <property type="project" value="Ensembl"/>
</dbReference>
<dbReference type="GO" id="GO:0071409">
    <property type="term" value="P:cellular response to cycloheximide"/>
    <property type="evidence" value="ECO:0007669"/>
    <property type="project" value="Ensembl"/>
</dbReference>
<dbReference type="GO" id="GO:0071363">
    <property type="term" value="P:cellular response to growth factor stimulus"/>
    <property type="evidence" value="ECO:0000314"/>
    <property type="project" value="BHF-UCL"/>
</dbReference>
<dbReference type="GO" id="GO:0070301">
    <property type="term" value="P:cellular response to hydrogen peroxide"/>
    <property type="evidence" value="ECO:0007669"/>
    <property type="project" value="Ensembl"/>
</dbReference>
<dbReference type="GO" id="GO:0071499">
    <property type="term" value="P:cellular response to laminar fluid shear stress"/>
    <property type="evidence" value="ECO:0000315"/>
    <property type="project" value="BHF-UCL"/>
</dbReference>
<dbReference type="GO" id="GO:1990830">
    <property type="term" value="P:cellular response to leukemia inhibitory factor"/>
    <property type="evidence" value="ECO:0007669"/>
    <property type="project" value="Ensembl"/>
</dbReference>
<dbReference type="GO" id="GO:1901653">
    <property type="term" value="P:cellular response to peptide"/>
    <property type="evidence" value="ECO:0007669"/>
    <property type="project" value="Ensembl"/>
</dbReference>
<dbReference type="GO" id="GO:0071300">
    <property type="term" value="P:cellular response to retinoic acid"/>
    <property type="evidence" value="ECO:0007669"/>
    <property type="project" value="Ensembl"/>
</dbReference>
<dbReference type="GO" id="GO:0002357">
    <property type="term" value="P:defense response to tumor cell"/>
    <property type="evidence" value="ECO:0000315"/>
    <property type="project" value="ARUK-UCL"/>
</dbReference>
<dbReference type="GO" id="GO:0009913">
    <property type="term" value="P:epidermal cell differentiation"/>
    <property type="evidence" value="ECO:0007669"/>
    <property type="project" value="Ensembl"/>
</dbReference>
<dbReference type="GO" id="GO:0048730">
    <property type="term" value="P:epidermis morphogenesis"/>
    <property type="evidence" value="ECO:0007669"/>
    <property type="project" value="Ensembl"/>
</dbReference>
<dbReference type="GO" id="GO:0061436">
    <property type="term" value="P:establishment of skin barrier"/>
    <property type="evidence" value="ECO:0007669"/>
    <property type="project" value="Ensembl"/>
</dbReference>
<dbReference type="GO" id="GO:0045444">
    <property type="term" value="P:fat cell differentiation"/>
    <property type="evidence" value="ECO:0000250"/>
    <property type="project" value="BHF-UCL"/>
</dbReference>
<dbReference type="GO" id="GO:0007500">
    <property type="term" value="P:mesodermal cell fate determination"/>
    <property type="evidence" value="ECO:0000304"/>
    <property type="project" value="ProtInc"/>
</dbReference>
<dbReference type="GO" id="GO:0016525">
    <property type="term" value="P:negative regulation of angiogenesis"/>
    <property type="evidence" value="ECO:0000314"/>
    <property type="project" value="BHF-UCL"/>
</dbReference>
<dbReference type="GO" id="GO:0043124">
    <property type="term" value="P:negative regulation of canonical NF-kappaB signal transduction"/>
    <property type="evidence" value="ECO:0000314"/>
    <property type="project" value="BHF-UCL"/>
</dbReference>
<dbReference type="GO" id="GO:0090051">
    <property type="term" value="P:negative regulation of cell migration involved in sprouting angiogenesis"/>
    <property type="evidence" value="ECO:0000314"/>
    <property type="project" value="BHF-UCL"/>
</dbReference>
<dbReference type="GO" id="GO:0008285">
    <property type="term" value="P:negative regulation of cell population proliferation"/>
    <property type="evidence" value="ECO:0000304"/>
    <property type="project" value="ProtInc"/>
</dbReference>
<dbReference type="GO" id="GO:2000342">
    <property type="term" value="P:negative regulation of chemokine (C-X-C motif) ligand 2 production"/>
    <property type="evidence" value="ECO:0000314"/>
    <property type="project" value="BHF-UCL"/>
</dbReference>
<dbReference type="GO" id="GO:0045892">
    <property type="term" value="P:negative regulation of DNA-templated transcription"/>
    <property type="evidence" value="ECO:0000314"/>
    <property type="project" value="UniProtKB"/>
</dbReference>
<dbReference type="GO" id="GO:0070373">
    <property type="term" value="P:negative regulation of ERK1 and ERK2 cascade"/>
    <property type="evidence" value="ECO:0007669"/>
    <property type="project" value="Ensembl"/>
</dbReference>
<dbReference type="GO" id="GO:2001240">
    <property type="term" value="P:negative regulation of extrinsic apoptotic signaling pathway in absence of ligand"/>
    <property type="evidence" value="ECO:0000314"/>
    <property type="project" value="BHF-UCL"/>
</dbReference>
<dbReference type="GO" id="GO:2000134">
    <property type="term" value="P:negative regulation of G1/S transition of mitotic cell cycle"/>
    <property type="evidence" value="ECO:0000314"/>
    <property type="project" value="BHF-UCL"/>
</dbReference>
<dbReference type="GO" id="GO:0010629">
    <property type="term" value="P:negative regulation of gene expression"/>
    <property type="evidence" value="ECO:0000316"/>
    <property type="project" value="BHF-UCL"/>
</dbReference>
<dbReference type="GO" id="GO:0034115">
    <property type="term" value="P:negative regulation of heterotypic cell-cell adhesion"/>
    <property type="evidence" value="ECO:0000314"/>
    <property type="project" value="BHF-UCL"/>
</dbReference>
<dbReference type="GO" id="GO:0050728">
    <property type="term" value="P:negative regulation of inflammatory response"/>
    <property type="evidence" value="ECO:0000304"/>
    <property type="project" value="BHF-UCL"/>
</dbReference>
<dbReference type="GO" id="GO:0032717">
    <property type="term" value="P:negative regulation of interleukin-8 production"/>
    <property type="evidence" value="ECO:0000314"/>
    <property type="project" value="BHF-UCL"/>
</dbReference>
<dbReference type="GO" id="GO:1904998">
    <property type="term" value="P:negative regulation of leukocyte adhesion to arterial endothelial cell"/>
    <property type="evidence" value="ECO:0000316"/>
    <property type="project" value="BHF-UCL"/>
</dbReference>
<dbReference type="GO" id="GO:0014740">
    <property type="term" value="P:negative regulation of muscle hyperplasia"/>
    <property type="evidence" value="ECO:0007669"/>
    <property type="project" value="Ensembl"/>
</dbReference>
<dbReference type="GO" id="GO:0051898">
    <property type="term" value="P:negative regulation of phosphatidylinositol 3-kinase/protein kinase B signal transduction"/>
    <property type="evidence" value="ECO:0007669"/>
    <property type="project" value="Ensembl"/>
</dbReference>
<dbReference type="GO" id="GO:0060761">
    <property type="term" value="P:negative regulation of response to cytokine stimulus"/>
    <property type="evidence" value="ECO:0000314"/>
    <property type="project" value="BHF-UCL"/>
</dbReference>
<dbReference type="GO" id="GO:0048662">
    <property type="term" value="P:negative regulation of smooth muscle cell proliferation"/>
    <property type="evidence" value="ECO:0007669"/>
    <property type="project" value="Ensembl"/>
</dbReference>
<dbReference type="GO" id="GO:0000122">
    <property type="term" value="P:negative regulation of transcription by RNA polymerase II"/>
    <property type="evidence" value="ECO:0000314"/>
    <property type="project" value="BHF-UCL"/>
</dbReference>
<dbReference type="GO" id="GO:0045893">
    <property type="term" value="P:positive regulation of DNA-templated transcription"/>
    <property type="evidence" value="ECO:0000314"/>
    <property type="project" value="BHF-UCL"/>
</dbReference>
<dbReference type="GO" id="GO:0010628">
    <property type="term" value="P:positive regulation of gene expression"/>
    <property type="evidence" value="ECO:0000316"/>
    <property type="project" value="BHF-UCL"/>
</dbReference>
<dbReference type="GO" id="GO:0046985">
    <property type="term" value="P:positive regulation of hemoglobin biosynthetic process"/>
    <property type="evidence" value="ECO:0000315"/>
    <property type="project" value="BHF-UCL"/>
</dbReference>
<dbReference type="GO" id="GO:1902895">
    <property type="term" value="P:positive regulation of miRNA transcription"/>
    <property type="evidence" value="ECO:0000314"/>
    <property type="project" value="BHF-UCL"/>
</dbReference>
<dbReference type="GO" id="GO:0045429">
    <property type="term" value="P:positive regulation of nitric oxide biosynthetic process"/>
    <property type="evidence" value="ECO:0000315"/>
    <property type="project" value="BHF-UCL"/>
</dbReference>
<dbReference type="GO" id="GO:0051247">
    <property type="term" value="P:positive regulation of protein metabolic process"/>
    <property type="evidence" value="ECO:0000315"/>
    <property type="project" value="BHF-UCL"/>
</dbReference>
<dbReference type="GO" id="GO:1903672">
    <property type="term" value="P:positive regulation of sprouting angiogenesis"/>
    <property type="evidence" value="ECO:0000316"/>
    <property type="project" value="BHF-UCL"/>
</dbReference>
<dbReference type="GO" id="GO:0032206">
    <property type="term" value="P:positive regulation of telomere maintenance"/>
    <property type="evidence" value="ECO:0000314"/>
    <property type="project" value="BHF-UCL"/>
</dbReference>
<dbReference type="GO" id="GO:0045944">
    <property type="term" value="P:positive regulation of transcription by RNA polymerase II"/>
    <property type="evidence" value="ECO:0000314"/>
    <property type="project" value="BHF-UCL"/>
</dbReference>
<dbReference type="GO" id="GO:0031077">
    <property type="term" value="P:post-embryonic camera-type eye development"/>
    <property type="evidence" value="ECO:0007669"/>
    <property type="project" value="Ensembl"/>
</dbReference>
<dbReference type="GO" id="GO:0035166">
    <property type="term" value="P:post-embryonic hemopoiesis"/>
    <property type="evidence" value="ECO:0000315"/>
    <property type="project" value="BHF-UCL"/>
</dbReference>
<dbReference type="GO" id="GO:0048679">
    <property type="term" value="P:regulation of axon regeneration"/>
    <property type="evidence" value="ECO:0007669"/>
    <property type="project" value="Ensembl"/>
</dbReference>
<dbReference type="GO" id="GO:0120222">
    <property type="term" value="P:regulation of blastocyst development"/>
    <property type="evidence" value="ECO:0007669"/>
    <property type="project" value="Ensembl"/>
</dbReference>
<dbReference type="GO" id="GO:0045595">
    <property type="term" value="P:regulation of cell differentiation"/>
    <property type="evidence" value="ECO:0000250"/>
    <property type="project" value="UniProtKB"/>
</dbReference>
<dbReference type="GO" id="GO:0006357">
    <property type="term" value="P:regulation of transcription by RNA polymerase II"/>
    <property type="evidence" value="ECO:0000318"/>
    <property type="project" value="GO_Central"/>
</dbReference>
<dbReference type="GO" id="GO:0035019">
    <property type="term" value="P:somatic stem cell population maintenance"/>
    <property type="evidence" value="ECO:0007669"/>
    <property type="project" value="Ensembl"/>
</dbReference>
<dbReference type="GO" id="GO:0019827">
    <property type="term" value="P:stem cell population maintenance"/>
    <property type="evidence" value="ECO:0000250"/>
    <property type="project" value="UniProtKB"/>
</dbReference>
<dbReference type="GO" id="GO:0006366">
    <property type="term" value="P:transcription by RNA polymerase II"/>
    <property type="evidence" value="ECO:0007669"/>
    <property type="project" value="Ensembl"/>
</dbReference>
<dbReference type="DisProt" id="DP01174"/>
<dbReference type="FunFam" id="3.30.160.60:FF:000018">
    <property type="entry name" value="Krueppel-like factor 15"/>
    <property type="match status" value="1"/>
</dbReference>
<dbReference type="FunFam" id="3.30.160.60:FF:000237">
    <property type="entry name" value="Krueppel-like factor 2"/>
    <property type="match status" value="1"/>
</dbReference>
<dbReference type="FunFam" id="3.30.160.60:FF:000624">
    <property type="entry name" value="zinc finger protein 697"/>
    <property type="match status" value="1"/>
</dbReference>
<dbReference type="Gene3D" id="3.30.160.60">
    <property type="entry name" value="Classic Zinc Finger"/>
    <property type="match status" value="3"/>
</dbReference>
<dbReference type="InterPro" id="IPR036236">
    <property type="entry name" value="Znf_C2H2_sf"/>
</dbReference>
<dbReference type="InterPro" id="IPR013087">
    <property type="entry name" value="Znf_C2H2_type"/>
</dbReference>
<dbReference type="PANTHER" id="PTHR23235:SF117">
    <property type="entry name" value="KRUEPPEL-LIKE FACTOR 4"/>
    <property type="match status" value="1"/>
</dbReference>
<dbReference type="PANTHER" id="PTHR23235">
    <property type="entry name" value="KRUEPPEL-LIKE TRANSCRIPTION FACTOR"/>
    <property type="match status" value="1"/>
</dbReference>
<dbReference type="Pfam" id="PF00096">
    <property type="entry name" value="zf-C2H2"/>
    <property type="match status" value="3"/>
</dbReference>
<dbReference type="SMART" id="SM00355">
    <property type="entry name" value="ZnF_C2H2"/>
    <property type="match status" value="3"/>
</dbReference>
<dbReference type="SUPFAM" id="SSF57667">
    <property type="entry name" value="beta-beta-alpha zinc fingers"/>
    <property type="match status" value="2"/>
</dbReference>
<dbReference type="PROSITE" id="PS00028">
    <property type="entry name" value="ZINC_FINGER_C2H2_1"/>
    <property type="match status" value="3"/>
</dbReference>
<dbReference type="PROSITE" id="PS50157">
    <property type="entry name" value="ZINC_FINGER_C2H2_2"/>
    <property type="match status" value="3"/>
</dbReference>
<sequence length="513" mass="54671">MRQPPGESDMAVSDALLPSFSTFASGPAGREKTLRQAGAPNNRWREELSHMKRLPPVLPGRPYDLAAATVATDLESGGAGAACGGSNLAPLPRRETEEFNDLLDLDFILSNSLTHPPESVAATVSSSASASSSSSPSSSGPASAPSTCSFTYPIRAGNDPGVAPGGTGGGLLYGRESAPPPTAPFNLADINDVSPSGGFVAELLRPELDPVYIPPQQPQPPGGGLMGKFVLKASLSAPGSEYGSPSVISVSKGSPDGSHPVVVAPYNGGPPRTCPKIKQEAVSSCTHLGAGPPLSNGHRPAAHDFPLGRQLPSRTTPTLGLEEVLSSRDCHPALPLPPGFHPHPGPNYPSFLPDQMQPQVPPLHYQGQSRGFVARAGEPCVCWPHFGTHGMMLTPPSSPLELMPPGSCMPEEPKPKRGRRSWPRKRTATHTCDYAGCGKTYTKSSHLKAHLRTHTGEKPYHCDWDGCGWKFARSDELTRHYRKHTGHRPFQCQKCDRAFSRSDHLALHMKRHF</sequence>
<gene>
    <name evidence="21" type="primary">KLF4</name>
    <name type="synonym">EZF</name>
    <name type="synonym">GKLF</name>
</gene>
<organism>
    <name type="scientific">Homo sapiens</name>
    <name type="common">Human</name>
    <dbReference type="NCBI Taxonomy" id="9606"/>
    <lineage>
        <taxon>Eukaryota</taxon>
        <taxon>Metazoa</taxon>
        <taxon>Chordata</taxon>
        <taxon>Craniata</taxon>
        <taxon>Vertebrata</taxon>
        <taxon>Euteleostomi</taxon>
        <taxon>Mammalia</taxon>
        <taxon>Eutheria</taxon>
        <taxon>Euarchontoglires</taxon>
        <taxon>Primates</taxon>
        <taxon>Haplorrhini</taxon>
        <taxon>Catarrhini</taxon>
        <taxon>Hominidae</taxon>
        <taxon>Homo</taxon>
    </lineage>
</organism>
<feature type="chain" id="PRO_0000047167" description="Krueppel-like factor 4">
    <location>
        <begin position="1"/>
        <end position="513"/>
    </location>
</feature>
<feature type="zinc finger region" description="C2H2-type 1" evidence="3">
    <location>
        <begin position="430"/>
        <end position="454"/>
    </location>
</feature>
<feature type="zinc finger region" description="C2H2-type 2" evidence="3">
    <location>
        <begin position="460"/>
        <end position="484"/>
    </location>
</feature>
<feature type="zinc finger region" description="C2H2-type 3" evidence="3">
    <location>
        <begin position="490"/>
        <end position="512"/>
    </location>
</feature>
<feature type="region of interest" description="Disordered" evidence="4">
    <location>
        <begin position="22"/>
        <end position="45"/>
    </location>
</feature>
<feature type="region of interest" description="Interaction with ZNF296" evidence="2">
    <location>
        <begin position="416"/>
        <end position="513"/>
    </location>
</feature>
<feature type="region of interest" description="Interaction with target DNA" evidence="1">
    <location>
        <begin position="473"/>
        <end position="504"/>
    </location>
</feature>
<feature type="short sequence motif" description="9aaTAD" evidence="12">
    <location>
        <begin position="101"/>
        <end position="109"/>
    </location>
</feature>
<feature type="modified residue" description="Phosphoserine" evidence="22">
    <location>
        <position position="254"/>
    </location>
</feature>
<feature type="modified residue" description="5-glutamyl polyglutamate" evidence="2">
    <location>
        <position position="411"/>
    </location>
</feature>
<feature type="cross-link" description="Glycyl lysine isopeptide (Lys-Gly) (interchain with G-Cter in ubiquitin)" evidence="8">
    <location>
        <position position="32"/>
    </location>
</feature>
<feature type="splice variant" id="VSP_040569" description="In isoform 3." evidence="15">
    <location>
        <begin position="1"/>
        <end position="50"/>
    </location>
</feature>
<feature type="splice variant" id="VSP_047470" description="In isoform 4." evidence="17">
    <original>RWREELSHMKRLPPVLPGRPYDLAAATVATDLESGGAGAACGGSNLAPLPRRETEEFNDLLDLDFILSNSLTHPPE</original>
    <variation>SSCHPVPACQRSPSQRGEDDRGPGKGPPPTLVITRAAAKPTQRVPISRHTCEPTQVRNLTTVTGTAVDGNSPAQMN</variation>
    <location>
        <begin position="43"/>
        <end position="118"/>
    </location>
</feature>
<feature type="splice variant" id="VSP_047471" description="In isoform 5." evidence="17">
    <original>RWREELSHMKRLPPVLPGRPY</original>
    <variation>VRNLTTVTGTAVDGNSPAQMN</variation>
    <location>
        <begin position="43"/>
        <end position="63"/>
    </location>
</feature>
<feature type="splice variant" id="VSP_047472" description="In isoform 5." evidence="17">
    <location>
        <begin position="64"/>
        <end position="513"/>
    </location>
</feature>
<feature type="splice variant" id="VSP_047473" description="In isoform 4." evidence="17">
    <location>
        <begin position="119"/>
        <end position="513"/>
    </location>
</feature>
<feature type="splice variant" id="VSP_036399" description="In isoform 2 and isoform 3." evidence="14 15 16 18 19">
    <location>
        <begin position="367"/>
        <end position="400"/>
    </location>
</feature>
<feature type="sequence variant" id="VAR_059888" description="In dbSNP:rs1059913." evidence="13">
    <original>T</original>
    <variation>S</variation>
    <location>
        <position position="315"/>
    </location>
</feature>
<feature type="sequence variant" id="VAR_059889" description="In dbSNP:rs1059914." evidence="13">
    <original>L</original>
    <variation>F</variation>
    <location>
        <position position="321"/>
    </location>
</feature>
<feature type="sequence conflict" description="In Ref. 1; AAC03462." evidence="20" ref="1">
    <original>GR</original>
    <variation>AG</variation>
    <location>
        <begin position="60"/>
        <end position="61"/>
    </location>
</feature>
<feature type="sequence conflict" description="In Ref. 1; AAC03462." evidence="20" ref="1">
    <original>G</original>
    <variation>A</variation>
    <location>
        <position position="77"/>
    </location>
</feature>
<feature type="sequence conflict" description="In Ref. 1; AAC03462." evidence="20" ref="1">
    <original>S</original>
    <variation>T</variation>
    <location>
        <position position="251"/>
    </location>
</feature>
<feature type="sequence conflict" description="In Ref. 4; AAB48399." evidence="20" ref="4">
    <original>D</original>
    <variation>N</variation>
    <location>
        <position position="304"/>
    </location>
</feature>
<feature type="sequence conflict" description="In Ref. 4; AAB48399." evidence="20" ref="4">
    <original>D</original>
    <variation>E</variation>
    <location>
        <position position="329"/>
    </location>
</feature>
<feature type="strand" evidence="23">
    <location>
        <begin position="434"/>
        <end position="436"/>
    </location>
</feature>
<feature type="helix" evidence="23">
    <location>
        <begin position="444"/>
        <end position="455"/>
    </location>
</feature>
<feature type="strand" evidence="23">
    <location>
        <begin position="470"/>
        <end position="473"/>
    </location>
</feature>
<feature type="helix" evidence="23">
    <location>
        <begin position="474"/>
        <end position="485"/>
    </location>
</feature>
<feature type="strand" evidence="23">
    <location>
        <begin position="493"/>
        <end position="496"/>
    </location>
</feature>
<feature type="strand" evidence="23">
    <location>
        <begin position="498"/>
        <end position="501"/>
    </location>
</feature>
<feature type="helix" evidence="23">
    <location>
        <begin position="502"/>
        <end position="510"/>
    </location>
</feature>
<name>KLF4_HUMAN</name>
<comment type="function">
    <text evidence="5 9">Transcription factor; can act both as activator and as repressor. Binds the 5'-CACCC-3' core sequence. Binds to the promoter region of its own gene and can activate its own transcription. Regulates the expression of key transcription factors during embryonic development. Plays an important role in maintaining embryonic stem cells, and in preventing their differentiation. Required for establishing the barrier function of the skin and for postnatal maturation and maintenance of the ocular surface. Involved in the differentiation of epithelial cells and may also function in skeletal and kidney development. Contributes to the down-regulation of p53/TP53 transcription.</text>
</comment>
<comment type="subunit">
    <text evidence="2 5 10 11">Interacts with POU5F1/OCT4 and SOX2 (By similarity). Interacts with MUC1 (via the C-terminal domain) (PubMed:17308127). Interacts with MEIS2 isoform 4 and PBX1 isoform PBX1a (PubMed:21746878). Interacts with ZNF296 (By similarity). Interacts with GLIS1 (PubMed:21654807). Interacts with BTRC; this interaction leads to KLF4 ubiquitination and subsequent degradation (By similarity). Interacts with IPO7; the interaction facilitates nuclear translocation of KLF4 in dental papilla cells (By similarity).</text>
</comment>
<comment type="interaction">
    <interactant intactId="EBI-7232405">
        <id>O43474</id>
    </interactant>
    <interactant intactId="EBI-908846">
        <id>Q13363</id>
        <label>CTBP1</label>
    </interactant>
    <organismsDiffer>false</organismsDiffer>
    <experiments>4</experiments>
</comment>
<comment type="interaction">
    <interactant intactId="EBI-7232405">
        <id>O43474</id>
    </interactant>
    <interactant intactId="EBI-739789">
        <id>Q92997</id>
        <label>DVL3</label>
    </interactant>
    <organismsDiffer>false</organismsDiffer>
    <experiments>3</experiments>
</comment>
<comment type="interaction">
    <interactant intactId="EBI-7232405">
        <id>O43474</id>
    </interactant>
    <interactant intactId="EBI-740553">
        <id>P13807</id>
        <label>GYS1</label>
    </interactant>
    <organismsDiffer>false</organismsDiffer>
    <experiments>5</experiments>
</comment>
<comment type="interaction">
    <interactant intactId="EBI-7232405">
        <id>O43474</id>
    </interactant>
    <interactant intactId="EBI-740220">
        <id>O14964</id>
        <label>HGS</label>
    </interactant>
    <organismsDiffer>false</organismsDiffer>
    <experiments>3</experiments>
</comment>
<comment type="interaction">
    <interactant intactId="EBI-7232405">
        <id>O43474</id>
    </interactant>
    <interactant intactId="EBI-7116203">
        <id>O75031</id>
        <label>HSF2BP</label>
    </interactant>
    <organismsDiffer>false</organismsDiffer>
    <experiments>3</experiments>
</comment>
<comment type="interaction">
    <interactant intactId="EBI-7232405">
        <id>O43474</id>
    </interactant>
    <interactant intactId="EBI-1783068">
        <id>O95983</id>
        <label>MBD3</label>
    </interactant>
    <organismsDiffer>false</organismsDiffer>
    <experiments>3</experiments>
</comment>
<comment type="interaction">
    <interactant intactId="EBI-7232405">
        <id>O43474</id>
    </interactant>
    <interactant intactId="EBI-7950783">
        <id>Q96JP2</id>
        <label>MYO15B</label>
    </interactant>
    <organismsDiffer>false</organismsDiffer>
    <experiments>3</experiments>
</comment>
<comment type="interaction">
    <interactant intactId="EBI-7232405">
        <id>O43474</id>
    </interactant>
    <interactant intactId="EBI-12111000">
        <id>P55771</id>
        <label>PAX9</label>
    </interactant>
    <organismsDiffer>false</organismsDiffer>
    <experiments>3</experiments>
</comment>
<comment type="interaction">
    <interactant intactId="EBI-7232405">
        <id>O43474</id>
    </interactant>
    <interactant intactId="EBI-11741437">
        <id>Q08117-2</id>
        <label>TLE5</label>
    </interactant>
    <organismsDiffer>false</organismsDiffer>
    <experiments>3</experiments>
</comment>
<comment type="subcellular location">
    <subcellularLocation>
        <location evidence="2">Nucleus</location>
    </subcellularLocation>
    <subcellularLocation>
        <location evidence="2">Cytoplasm</location>
    </subcellularLocation>
</comment>
<comment type="alternative products">
    <event type="alternative splicing"/>
    <isoform>
        <id>O43474-3</id>
        <name>1</name>
        <sequence type="displayed"/>
    </isoform>
    <isoform>
        <id>O43474-1</id>
        <name>2</name>
        <sequence type="described" ref="VSP_036399"/>
    </isoform>
    <isoform>
        <id>O43474-4</id>
        <name>3</name>
        <sequence type="described" ref="VSP_040569 VSP_036399"/>
    </isoform>
    <isoform>
        <id>O43474-5</id>
        <name>4</name>
        <name>1a</name>
        <sequence type="described" ref="VSP_047470 VSP_047473"/>
    </isoform>
    <isoform>
        <id>O43474-6</id>
        <name>5</name>
        <sequence type="described" ref="VSP_047471 VSP_047472"/>
    </isoform>
</comment>
<comment type="domain">
    <text evidence="6 12">The 9aaTAD motif is a transactivation domain present in a large number of yeast and animal transcription factors.</text>
</comment>
<comment type="PTM">
    <text evidence="2">Ubiquitinated. 'Lys-48'-linked ubiquitinated and targeted for proteasomal degradation by the SCF(BTRC) E3 ubiquitin-protein ligase complex, thereby negatively regulating cell pluripotency maintenance and embryogenesis.</text>
</comment>
<comment type="PTM">
    <text evidence="2">Polyglutamylated by TTLL1 and TTLL4 at Glu-411, which inhibits KLF4 binding with E3 ligase component BTRC, thereby impeding ubiquitination. Deglutamylated by CCP1 and CCP6; deglutamylation promotes KLF4 ubiquitination. KLF4 glutamylation state plays a critical role in the regulation of its function in cell reprogramming, pluripotency maintenance and embryogenesis.</text>
</comment>
<comment type="biotechnology">
    <text evidence="7">POU5F1/OCT4, SOX2, MYC/c-Myc and KLF4 are the four Yamanaka factors. When combined, these factors are sufficient to reprogram differentiated cells to an embryonic-like state designated iPS (induced pluripotent stem) cells. iPS cells exhibit the morphology and growth properties of ES cells and express ES cell marker genes.</text>
</comment>
<comment type="similarity">
    <text evidence="20">Belongs to the krueppel C2H2-type zinc-finger protein family.</text>
</comment>
<comment type="sequence caution" evidence="20">
    <conflict type="erroneous initiation">
        <sequence resource="EMBL-CDS" id="AAB48399"/>
    </conflict>
    <text>Truncated N-terminus.</text>
</comment>
<comment type="sequence caution" evidence="20">
    <conflict type="erroneous initiation">
        <sequence resource="EMBL-CDS" id="AAC03462"/>
    </conflict>
    <text>Truncated N-terminus.</text>
</comment>
<comment type="sequence caution" evidence="20">
    <conflict type="erroneous initiation">
        <sequence resource="EMBL-CDS" id="AAD42165"/>
    </conflict>
    <text>Truncated N-terminus.</text>
</comment>
<comment type="sequence caution" evidence="20">
    <conflict type="erroneous initiation">
        <sequence resource="EMBL-CDS" id="AAH29923"/>
    </conflict>
    <text>Truncated N-terminus.</text>
</comment>
<comment type="sequence caution" evidence="20">
    <conflict type="erroneous initiation">
        <sequence resource="EMBL-CDS" id="AAH30811"/>
    </conflict>
    <text>Truncated N-terminus.</text>
</comment>
<comment type="sequence caution" evidence="20">
    <conflict type="erroneous gene model prediction">
        <sequence resource="EMBL-CDS" id="ABG25917"/>
    </conflict>
</comment>
<comment type="sequence caution" evidence="20">
    <conflict type="erroneous initiation">
        <sequence resource="EMBL-CDS" id="BAG36271"/>
    </conflict>
    <text>Truncated N-terminus.</text>
</comment>
<comment type="sequence caution" evidence="20">
    <conflict type="erroneous gene model prediction">
        <sequence resource="EMBL-CDS" id="EAW59020"/>
    </conflict>
</comment>
<comment type="sequence caution" evidence="20">
    <conflict type="erroneous gene model prediction">
        <sequence resource="EMBL-CDS" id="EAW59021"/>
    </conflict>
</comment>
<comment type="online information" name="Atlas of Genetics and Cytogenetics in Oncology and Haematology">
    <link uri="https://atlasgeneticsoncology.org/gene/44316/KLF4"/>
</comment>
<evidence type="ECO:0000250" key="1"/>
<evidence type="ECO:0000250" key="2">
    <source>
        <dbReference type="UniProtKB" id="Q60793"/>
    </source>
</evidence>
<evidence type="ECO:0000255" key="3">
    <source>
        <dbReference type="PROSITE-ProRule" id="PRU00042"/>
    </source>
</evidence>
<evidence type="ECO:0000256" key="4">
    <source>
        <dbReference type="SAM" id="MobiDB-lite"/>
    </source>
</evidence>
<evidence type="ECO:0000269" key="5">
    <source>
    </source>
</evidence>
<evidence type="ECO:0000269" key="6">
    <source>
    </source>
</evidence>
<evidence type="ECO:0000269" key="7">
    <source>
    </source>
</evidence>
<evidence type="ECO:0000269" key="8">
    <source>
    </source>
</evidence>
<evidence type="ECO:0000269" key="9">
    <source>
    </source>
</evidence>
<evidence type="ECO:0000269" key="10">
    <source>
    </source>
</evidence>
<evidence type="ECO:0000269" key="11">
    <source>
    </source>
</evidence>
<evidence type="ECO:0000269" key="12">
    <source>
    </source>
</evidence>
<evidence type="ECO:0000269" key="13">
    <source ref="4"/>
</evidence>
<evidence type="ECO:0000303" key="14">
    <source>
    </source>
</evidence>
<evidence type="ECO:0000303" key="15">
    <source>
    </source>
</evidence>
<evidence type="ECO:0000303" key="16">
    <source>
    </source>
</evidence>
<evidence type="ECO:0000303" key="17">
    <source>
    </source>
</evidence>
<evidence type="ECO:0000303" key="18">
    <source>
    </source>
</evidence>
<evidence type="ECO:0000303" key="19">
    <source ref="4"/>
</evidence>
<evidence type="ECO:0000305" key="20"/>
<evidence type="ECO:0000312" key="21">
    <source>
        <dbReference type="HGNC" id="HGNC:6348"/>
    </source>
</evidence>
<evidence type="ECO:0007744" key="22">
    <source>
    </source>
</evidence>
<evidence type="ECO:0007829" key="23">
    <source>
        <dbReference type="PDB" id="6VTX"/>
    </source>
</evidence>
<reference key="1">
    <citation type="journal article" date="1998" name="J. Biol. Chem.">
        <title>Human EZF, a Kruppel-like zinc finger protein, is expressed in vascular endothelial cells and contains transcriptional activation and repression domains.</title>
        <authorList>
            <person name="Yet S.-F."/>
            <person name="McA'Nulty M.M."/>
            <person name="Folta S.C."/>
            <person name="Yen H.-W."/>
            <person name="Yoshizumi M."/>
            <person name="Hsieh C.-M."/>
            <person name="Layne M.D."/>
            <person name="Chin M.T."/>
            <person name="Wang H."/>
            <person name="Perrella M.A."/>
            <person name="Jain M.K."/>
            <person name="Lee M.-E."/>
        </authorList>
    </citation>
    <scope>NUCLEOTIDE SEQUENCE [MRNA] (ISOFORM 2)</scope>
</reference>
<reference key="2">
    <citation type="journal article" date="1999" name="Cell Growth Differ.">
        <title>Oncogene expression cloning by retroviral transduction of adenovirus E1A-immortalized rat kidney RK3E cells: transformation of a host with epithelial features by c-MYC and the zinc finger protein GKLF.</title>
        <authorList>
            <person name="Foster K.W."/>
            <person name="Ren S."/>
            <person name="Louro I.D."/>
            <person name="Lobo-Ruppert S.M."/>
            <person name="McKie-Bell P."/>
            <person name="Grizzle W."/>
            <person name="Hayes M.R."/>
            <person name="Broker T.R."/>
            <person name="Chow L.T."/>
            <person name="Ruppert J.M."/>
        </authorList>
    </citation>
    <scope>NUCLEOTIDE SEQUENCE [MRNA] (ISOFORM 2)</scope>
</reference>
<reference key="3">
    <citation type="journal article" date="2013" name="FASEB J.">
        <title>Shaking the family tree: Identification of novel and biologically active alternatively spliced isoforms across the KLF family of transcription factors.</title>
        <authorList>
            <person name="Camacho-Vanegas O."/>
            <person name="Till J."/>
            <person name="Miranda-Lorenzo I."/>
            <person name="Ozturk B."/>
            <person name="Camacho S.C."/>
            <person name="Martignetti J.A."/>
        </authorList>
    </citation>
    <scope>NUCLEOTIDE SEQUENCE [MRNA] (ISOFORMS 4 AND 5)</scope>
    <scope>ALTERNATIVE SPLICING</scope>
</reference>
<reference key="4">
    <citation type="submission" date="1996-09" db="EMBL/GenBank/DDBJ databases">
        <authorList>
            <person name="Garrett-Sinha L.A."/>
            <person name="de Crombrugghe B."/>
        </authorList>
    </citation>
    <scope>NUCLEOTIDE SEQUENCE [MRNA] (ISOFORM 2)</scope>
    <scope>VARIANTS SER-315 AND PHE-321</scope>
    <source>
        <tissue>Placenta</tissue>
    </source>
</reference>
<reference key="5">
    <citation type="journal article" date="2004" name="Nat. Genet.">
        <title>Complete sequencing and characterization of 21,243 full-length human cDNAs.</title>
        <authorList>
            <person name="Ota T."/>
            <person name="Suzuki Y."/>
            <person name="Nishikawa T."/>
            <person name="Otsuki T."/>
            <person name="Sugiyama T."/>
            <person name="Irie R."/>
            <person name="Wakamatsu A."/>
            <person name="Hayashi K."/>
            <person name="Sato H."/>
            <person name="Nagai K."/>
            <person name="Kimura K."/>
            <person name="Makita H."/>
            <person name="Sekine M."/>
            <person name="Obayashi M."/>
            <person name="Nishi T."/>
            <person name="Shibahara T."/>
            <person name="Tanaka T."/>
            <person name="Ishii S."/>
            <person name="Yamamoto J."/>
            <person name="Saito K."/>
            <person name="Kawai Y."/>
            <person name="Isono Y."/>
            <person name="Nakamura Y."/>
            <person name="Nagahari K."/>
            <person name="Murakami K."/>
            <person name="Yasuda T."/>
            <person name="Iwayanagi T."/>
            <person name="Wagatsuma M."/>
            <person name="Shiratori A."/>
            <person name="Sudo H."/>
            <person name="Hosoiri T."/>
            <person name="Kaku Y."/>
            <person name="Kodaira H."/>
            <person name="Kondo H."/>
            <person name="Sugawara M."/>
            <person name="Takahashi M."/>
            <person name="Kanda K."/>
            <person name="Yokoi T."/>
            <person name="Furuya T."/>
            <person name="Kikkawa E."/>
            <person name="Omura Y."/>
            <person name="Abe K."/>
            <person name="Kamihara K."/>
            <person name="Katsuta N."/>
            <person name="Sato K."/>
            <person name="Tanikawa M."/>
            <person name="Yamazaki M."/>
            <person name="Ninomiya K."/>
            <person name="Ishibashi T."/>
            <person name="Yamashita H."/>
            <person name="Murakawa K."/>
            <person name="Fujimori K."/>
            <person name="Tanai H."/>
            <person name="Kimata M."/>
            <person name="Watanabe M."/>
            <person name="Hiraoka S."/>
            <person name="Chiba Y."/>
            <person name="Ishida S."/>
            <person name="Ono Y."/>
            <person name="Takiguchi S."/>
            <person name="Watanabe S."/>
            <person name="Yosida M."/>
            <person name="Hotuta T."/>
            <person name="Kusano J."/>
            <person name="Kanehori K."/>
            <person name="Takahashi-Fujii A."/>
            <person name="Hara H."/>
            <person name="Tanase T.-O."/>
            <person name="Nomura Y."/>
            <person name="Togiya S."/>
            <person name="Komai F."/>
            <person name="Hara R."/>
            <person name="Takeuchi K."/>
            <person name="Arita M."/>
            <person name="Imose N."/>
            <person name="Musashino K."/>
            <person name="Yuuki H."/>
            <person name="Oshima A."/>
            <person name="Sasaki N."/>
            <person name="Aotsuka S."/>
            <person name="Yoshikawa Y."/>
            <person name="Matsunawa H."/>
            <person name="Ichihara T."/>
            <person name="Shiohata N."/>
            <person name="Sano S."/>
            <person name="Moriya S."/>
            <person name="Momiyama H."/>
            <person name="Satoh N."/>
            <person name="Takami S."/>
            <person name="Terashima Y."/>
            <person name="Suzuki O."/>
            <person name="Nakagawa S."/>
            <person name="Senoh A."/>
            <person name="Mizoguchi H."/>
            <person name="Goto Y."/>
            <person name="Shimizu F."/>
            <person name="Wakebe H."/>
            <person name="Hishigaki H."/>
            <person name="Watanabe T."/>
            <person name="Sugiyama A."/>
            <person name="Takemoto M."/>
            <person name="Kawakami B."/>
            <person name="Yamazaki M."/>
            <person name="Watanabe K."/>
            <person name="Kumagai A."/>
            <person name="Itakura S."/>
            <person name="Fukuzumi Y."/>
            <person name="Fujimori Y."/>
            <person name="Komiyama M."/>
            <person name="Tashiro H."/>
            <person name="Tanigami A."/>
            <person name="Fujiwara T."/>
            <person name="Ono T."/>
            <person name="Yamada K."/>
            <person name="Fujii Y."/>
            <person name="Ozaki K."/>
            <person name="Hirao M."/>
            <person name="Ohmori Y."/>
            <person name="Kawabata A."/>
            <person name="Hikiji T."/>
            <person name="Kobatake N."/>
            <person name="Inagaki H."/>
            <person name="Ikema Y."/>
            <person name="Okamoto S."/>
            <person name="Okitani R."/>
            <person name="Kawakami T."/>
            <person name="Noguchi S."/>
            <person name="Itoh T."/>
            <person name="Shigeta K."/>
            <person name="Senba T."/>
            <person name="Matsumura K."/>
            <person name="Nakajima Y."/>
            <person name="Mizuno T."/>
            <person name="Morinaga M."/>
            <person name="Sasaki M."/>
            <person name="Togashi T."/>
            <person name="Oyama M."/>
            <person name="Hata H."/>
            <person name="Watanabe M."/>
            <person name="Komatsu T."/>
            <person name="Mizushima-Sugano J."/>
            <person name="Satoh T."/>
            <person name="Shirai Y."/>
            <person name="Takahashi Y."/>
            <person name="Nakagawa K."/>
            <person name="Okumura K."/>
            <person name="Nagase T."/>
            <person name="Nomura N."/>
            <person name="Kikuchi H."/>
            <person name="Masuho Y."/>
            <person name="Yamashita R."/>
            <person name="Nakai K."/>
            <person name="Yada T."/>
            <person name="Nakamura Y."/>
            <person name="Ohara O."/>
            <person name="Isogai T."/>
            <person name="Sugano S."/>
        </authorList>
    </citation>
    <scope>NUCLEOTIDE SEQUENCE [LARGE SCALE MRNA] (ISOFORMS 2 AND 3)</scope>
    <source>
        <tissue>Substantia nigra</tissue>
        <tissue>Tongue</tissue>
    </source>
</reference>
<reference key="6">
    <citation type="submission" date="2006-05" db="EMBL/GenBank/DDBJ databases">
        <authorList>
            <consortium name="SeattleSNPs variation discovery resource"/>
        </authorList>
    </citation>
    <scope>NUCLEOTIDE SEQUENCE [GENOMIC DNA]</scope>
</reference>
<reference key="7">
    <citation type="journal article" date="2004" name="Nature">
        <title>DNA sequence and analysis of human chromosome 9.</title>
        <authorList>
            <person name="Humphray S.J."/>
            <person name="Oliver K."/>
            <person name="Hunt A.R."/>
            <person name="Plumb R.W."/>
            <person name="Loveland J.E."/>
            <person name="Howe K.L."/>
            <person name="Andrews T.D."/>
            <person name="Searle S."/>
            <person name="Hunt S.E."/>
            <person name="Scott C.E."/>
            <person name="Jones M.C."/>
            <person name="Ainscough R."/>
            <person name="Almeida J.P."/>
            <person name="Ambrose K.D."/>
            <person name="Ashwell R.I.S."/>
            <person name="Babbage A.K."/>
            <person name="Babbage S."/>
            <person name="Bagguley C.L."/>
            <person name="Bailey J."/>
            <person name="Banerjee R."/>
            <person name="Barker D.J."/>
            <person name="Barlow K.F."/>
            <person name="Bates K."/>
            <person name="Beasley H."/>
            <person name="Beasley O."/>
            <person name="Bird C.P."/>
            <person name="Bray-Allen S."/>
            <person name="Brown A.J."/>
            <person name="Brown J.Y."/>
            <person name="Burford D."/>
            <person name="Burrill W."/>
            <person name="Burton J."/>
            <person name="Carder C."/>
            <person name="Carter N.P."/>
            <person name="Chapman J.C."/>
            <person name="Chen Y."/>
            <person name="Clarke G."/>
            <person name="Clark S.Y."/>
            <person name="Clee C.M."/>
            <person name="Clegg S."/>
            <person name="Collier R.E."/>
            <person name="Corby N."/>
            <person name="Crosier M."/>
            <person name="Cummings A.T."/>
            <person name="Davies J."/>
            <person name="Dhami P."/>
            <person name="Dunn M."/>
            <person name="Dutta I."/>
            <person name="Dyer L.W."/>
            <person name="Earthrowl M.E."/>
            <person name="Faulkner L."/>
            <person name="Fleming C.J."/>
            <person name="Frankish A."/>
            <person name="Frankland J.A."/>
            <person name="French L."/>
            <person name="Fricker D.G."/>
            <person name="Garner P."/>
            <person name="Garnett J."/>
            <person name="Ghori J."/>
            <person name="Gilbert J.G.R."/>
            <person name="Glison C."/>
            <person name="Grafham D.V."/>
            <person name="Gribble S."/>
            <person name="Griffiths C."/>
            <person name="Griffiths-Jones S."/>
            <person name="Grocock R."/>
            <person name="Guy J."/>
            <person name="Hall R.E."/>
            <person name="Hammond S."/>
            <person name="Harley J.L."/>
            <person name="Harrison E.S.I."/>
            <person name="Hart E.A."/>
            <person name="Heath P.D."/>
            <person name="Henderson C.D."/>
            <person name="Hopkins B.L."/>
            <person name="Howard P.J."/>
            <person name="Howden P.J."/>
            <person name="Huckle E."/>
            <person name="Johnson C."/>
            <person name="Johnson D."/>
            <person name="Joy A.A."/>
            <person name="Kay M."/>
            <person name="Keenan S."/>
            <person name="Kershaw J.K."/>
            <person name="Kimberley A.M."/>
            <person name="King A."/>
            <person name="Knights A."/>
            <person name="Laird G.K."/>
            <person name="Langford C."/>
            <person name="Lawlor S."/>
            <person name="Leongamornlert D.A."/>
            <person name="Leversha M."/>
            <person name="Lloyd C."/>
            <person name="Lloyd D.M."/>
            <person name="Lovell J."/>
            <person name="Martin S."/>
            <person name="Mashreghi-Mohammadi M."/>
            <person name="Matthews L."/>
            <person name="McLaren S."/>
            <person name="McLay K.E."/>
            <person name="McMurray A."/>
            <person name="Milne S."/>
            <person name="Nickerson T."/>
            <person name="Nisbett J."/>
            <person name="Nordsiek G."/>
            <person name="Pearce A.V."/>
            <person name="Peck A.I."/>
            <person name="Porter K.M."/>
            <person name="Pandian R."/>
            <person name="Pelan S."/>
            <person name="Phillimore B."/>
            <person name="Povey S."/>
            <person name="Ramsey Y."/>
            <person name="Rand V."/>
            <person name="Scharfe M."/>
            <person name="Sehra H.K."/>
            <person name="Shownkeen R."/>
            <person name="Sims S.K."/>
            <person name="Skuce C.D."/>
            <person name="Smith M."/>
            <person name="Steward C.A."/>
            <person name="Swarbreck D."/>
            <person name="Sycamore N."/>
            <person name="Tester J."/>
            <person name="Thorpe A."/>
            <person name="Tracey A."/>
            <person name="Tromans A."/>
            <person name="Thomas D.W."/>
            <person name="Wall M."/>
            <person name="Wallis J.M."/>
            <person name="West A.P."/>
            <person name="Whitehead S.L."/>
            <person name="Willey D.L."/>
            <person name="Williams S.A."/>
            <person name="Wilming L."/>
            <person name="Wray P.W."/>
            <person name="Young L."/>
            <person name="Ashurst J.L."/>
            <person name="Coulson A."/>
            <person name="Blocker H."/>
            <person name="Durbin R.M."/>
            <person name="Sulston J.E."/>
            <person name="Hubbard T."/>
            <person name="Jackson M.J."/>
            <person name="Bentley D.R."/>
            <person name="Beck S."/>
            <person name="Rogers J."/>
            <person name="Dunham I."/>
        </authorList>
    </citation>
    <scope>NUCLEOTIDE SEQUENCE [LARGE SCALE GENOMIC DNA]</scope>
</reference>
<reference key="8">
    <citation type="submission" date="2005-07" db="EMBL/GenBank/DDBJ databases">
        <authorList>
            <person name="Mural R.J."/>
            <person name="Istrail S."/>
            <person name="Sutton G.G."/>
            <person name="Florea L."/>
            <person name="Halpern A.L."/>
            <person name="Mobarry C.M."/>
            <person name="Lippert R."/>
            <person name="Walenz B."/>
            <person name="Shatkay H."/>
            <person name="Dew I."/>
            <person name="Miller J.R."/>
            <person name="Flanigan M.J."/>
            <person name="Edwards N.J."/>
            <person name="Bolanos R."/>
            <person name="Fasulo D."/>
            <person name="Halldorsson B.V."/>
            <person name="Hannenhalli S."/>
            <person name="Turner R."/>
            <person name="Yooseph S."/>
            <person name="Lu F."/>
            <person name="Nusskern D.R."/>
            <person name="Shue B.C."/>
            <person name="Zheng X.H."/>
            <person name="Zhong F."/>
            <person name="Delcher A.L."/>
            <person name="Huson D.H."/>
            <person name="Kravitz S.A."/>
            <person name="Mouchard L."/>
            <person name="Reinert K."/>
            <person name="Remington K.A."/>
            <person name="Clark A.G."/>
            <person name="Waterman M.S."/>
            <person name="Eichler E.E."/>
            <person name="Adams M.D."/>
            <person name="Hunkapiller M.W."/>
            <person name="Myers E.W."/>
            <person name="Venter J.C."/>
        </authorList>
    </citation>
    <scope>NUCLEOTIDE SEQUENCE [LARGE SCALE GENOMIC DNA]</scope>
</reference>
<reference key="9">
    <citation type="journal article" date="2004" name="Genome Res.">
        <title>The status, quality, and expansion of the NIH full-length cDNA project: the Mammalian Gene Collection (MGC).</title>
        <authorList>
            <consortium name="The MGC Project Team"/>
        </authorList>
    </citation>
    <scope>NUCLEOTIDE SEQUENCE [LARGE SCALE MRNA] (ISOFORMS 1 AND 2)</scope>
    <source>
        <tissue>Cervix</tissue>
        <tissue>Lung</tissue>
    </source>
</reference>
<reference key="10">
    <citation type="journal article" date="2007" name="Cancer Res.">
        <title>Human mucin 1 oncoprotein represses transcription of the p53 tumor suppressor gene.</title>
        <authorList>
            <person name="Wei X."/>
            <person name="Xu H."/>
            <person name="Kufe D."/>
        </authorList>
    </citation>
    <scope>INTERACTION WITH MUC1</scope>
    <scope>FUNCTION</scope>
</reference>
<reference key="11">
    <citation type="journal article" date="2007" name="Cell">
        <title>Induction of pluripotent stem cells from adult human fibroblasts by defined factors.</title>
        <authorList>
            <person name="Takahashi K."/>
            <person name="Tanabe K."/>
            <person name="Ohnuki M."/>
            <person name="Narita M."/>
            <person name="Ichisaka T."/>
            <person name="Tomoda K."/>
            <person name="Yamanaka S."/>
        </authorList>
    </citation>
    <scope>BIOTECHNOLOGY</scope>
</reference>
<reference key="12">
    <citation type="journal article" date="2007" name="Genomics">
        <title>Nine-amino-acid transactivation domain: establishment and prediction utilities.</title>
        <authorList>
            <person name="Piskacek S."/>
            <person name="Gregor M."/>
            <person name="Nemethova M."/>
            <person name="Grabner M."/>
            <person name="Kovarik P."/>
            <person name="Piskacek M."/>
        </authorList>
    </citation>
    <scope>9AATAD MOTIF</scope>
</reference>
<reference key="13">
    <citation type="journal article" date="2008" name="Proc. Natl. Acad. Sci. U.S.A.">
        <title>A quantitative atlas of mitotic phosphorylation.</title>
        <authorList>
            <person name="Dephoure N."/>
            <person name="Zhou C."/>
            <person name="Villen J."/>
            <person name="Beausoleil S.A."/>
            <person name="Bakalarski C.E."/>
            <person name="Elledge S.J."/>
            <person name="Gygi S.P."/>
        </authorList>
    </citation>
    <scope>IDENTIFICATION BY MASS SPECTROMETRY [LARGE SCALE ANALYSIS]</scope>
    <source>
        <tissue>Cervix carcinoma</tissue>
    </source>
</reference>
<reference key="14">
    <citation type="journal article" date="2008" name="Proteomics">
        <title>Proteomic analysis of ubiquitinated proteins in normal hepatocyte cell line Chang liver cells.</title>
        <authorList>
            <person name="Tan F."/>
            <person name="Lu L."/>
            <person name="Cai Y."/>
            <person name="Wang J."/>
            <person name="Xie Y."/>
            <person name="Wang L."/>
            <person name="Gong Y."/>
            <person name="Xu B.-E."/>
            <person name="Wu J."/>
            <person name="Luo Y."/>
            <person name="Qiang B."/>
            <person name="Yuan J."/>
            <person name="Sun X."/>
            <person name="Peng X."/>
        </authorList>
    </citation>
    <scope>UBIQUITINATION [LARGE SCALE ANALYSIS] AT LYS-32</scope>
    <scope>IDENTIFICATION BY MASS SPECTROMETRY</scope>
    <source>
        <tissue>Liver</tissue>
    </source>
</reference>
<reference key="15">
    <citation type="journal article" date="2010" name="J. Biol. Chem.">
        <title>Kruppel-like factor 4 (Klf4) prevents embryonic stem (ES) cell differentiation by regulating Nanog gene expression.</title>
        <authorList>
            <person name="Zhang P."/>
            <person name="Andrianakos R."/>
            <person name="Yang Y."/>
            <person name="Liu C."/>
            <person name="Lu W."/>
        </authorList>
    </citation>
    <scope>FUNCTION</scope>
</reference>
<reference key="16">
    <citation type="journal article" date="2010" name="Sci. Signal.">
        <title>Quantitative phosphoproteomics reveals widespread full phosphorylation site occupancy during mitosis.</title>
        <authorList>
            <person name="Olsen J.V."/>
            <person name="Vermeulen M."/>
            <person name="Santamaria A."/>
            <person name="Kumar C."/>
            <person name="Miller M.L."/>
            <person name="Jensen L.J."/>
            <person name="Gnad F."/>
            <person name="Cox J."/>
            <person name="Jensen T.S."/>
            <person name="Nigg E.A."/>
            <person name="Brunak S."/>
            <person name="Mann M."/>
        </authorList>
    </citation>
    <scope>PHOSPHORYLATION [LARGE SCALE ANALYSIS] AT SER-254</scope>
    <scope>IDENTIFICATION BY MASS SPECTROMETRY [LARGE SCALE ANALYSIS]</scope>
    <source>
        <tissue>Cervix carcinoma</tissue>
    </source>
</reference>
<reference key="17">
    <citation type="journal article" date="2011" name="Mol. Cell. Biol.">
        <title>Cooperative transcriptional activation by Klf4, Meis2, and Pbx1.</title>
        <authorList>
            <person name="Bjerke G.A."/>
            <person name="Hyman-Walsh C."/>
            <person name="Wotton D."/>
        </authorList>
    </citation>
    <scope>INTERACTION WITH PBX1 AND MEIS2</scope>
</reference>
<reference key="18">
    <citation type="journal article" date="2011" name="Nature">
        <title>Direct reprogramming of somatic cells is promoted by maternal transcription factor Glis1.</title>
        <authorList>
            <person name="Maekawa M."/>
            <person name="Yamaguchi K."/>
            <person name="Nakamura T."/>
            <person name="Shibukawa R."/>
            <person name="Kodanaka I."/>
            <person name="Ichisaka T."/>
            <person name="Kawamura Y."/>
            <person name="Mochizuki H."/>
            <person name="Goshima N."/>
            <person name="Yamanaka S."/>
        </authorList>
    </citation>
    <scope>INTERACTION WITH GLIS1</scope>
</reference>
<reference key="19">
    <citation type="journal article" date="2012" name="Proc. Natl. Acad. Sci. U.S.A.">
        <title>N-terminal acetylome analyses and functional insights of the N-terminal acetyltransferase NatB.</title>
        <authorList>
            <person name="Van Damme P."/>
            <person name="Lasa M."/>
            <person name="Polevoda B."/>
            <person name="Gazquez C."/>
            <person name="Elosegui-Artola A."/>
            <person name="Kim D.S."/>
            <person name="De Juan-Pardo E."/>
            <person name="Demeyer K."/>
            <person name="Hole K."/>
            <person name="Larrea E."/>
            <person name="Timmerman E."/>
            <person name="Prieto J."/>
            <person name="Arnesen T."/>
            <person name="Sherman F."/>
            <person name="Gevaert K."/>
            <person name="Aldabe R."/>
        </authorList>
    </citation>
    <scope>IDENTIFICATION BY MASS SPECTROMETRY [LARGE SCALE ANALYSIS]</scope>
</reference>
<reference key="20">
    <citation type="journal article" date="2013" name="J. Proteome Res.">
        <title>Toward a comprehensive characterization of a human cancer cell phosphoproteome.</title>
        <authorList>
            <person name="Zhou H."/>
            <person name="Di Palma S."/>
            <person name="Preisinger C."/>
            <person name="Peng M."/>
            <person name="Polat A.N."/>
            <person name="Heck A.J."/>
            <person name="Mohammed S."/>
        </authorList>
    </citation>
    <scope>IDENTIFICATION BY MASS SPECTROMETRY [LARGE SCALE ANALYSIS]</scope>
    <source>
        <tissue>Cervix carcinoma</tissue>
    </source>
</reference>
<reference key="21">
    <citation type="journal article" date="2018" name="Nat. Commun.">
        <title>Klf4 glutamylation is required for cell reprogramming and early embryonic development in mice.</title>
        <authorList>
            <person name="Ye B."/>
            <person name="Liu B."/>
            <person name="Hao L."/>
            <person name="Zhu X."/>
            <person name="Yang L."/>
            <person name="Wang S."/>
            <person name="Xia P."/>
            <person name="Du Y."/>
            <person name="Meng S."/>
            <person name="Huang G."/>
            <person name="Qin X."/>
            <person name="Wang Y."/>
            <person name="Yan X."/>
            <person name="Li C."/>
            <person name="Hao J."/>
            <person name="Zhu P."/>
            <person name="He L."/>
            <person name="Tian Y."/>
            <person name="Fan Z."/>
        </authorList>
    </citation>
    <scope>GLYTAMYLATION</scope>
</reference>
<reference key="22">
    <citation type="journal article" date="2020" name="Cell. Mol. Life Sci.">
        <title>The evolution of the 9aaTAD domain in Sp2 proteins: inactivation with valines and intron reservoirs.</title>
        <authorList>
            <person name="Piskacek M."/>
            <person name="Havelka M."/>
            <person name="Jendruchova K."/>
            <person name="Knight A."/>
            <person name="Keegan L.P."/>
        </authorList>
    </citation>
    <scope>9AATAD MOTIF</scope>
</reference>
<keyword id="KW-0002">3D-structure</keyword>
<keyword id="KW-0010">Activator</keyword>
<keyword id="KW-0025">Alternative splicing</keyword>
<keyword id="KW-0963">Cytoplasm</keyword>
<keyword id="KW-0238">DNA-binding</keyword>
<keyword id="KW-1017">Isopeptide bond</keyword>
<keyword id="KW-0479">Metal-binding</keyword>
<keyword id="KW-0539">Nucleus</keyword>
<keyword id="KW-0597">Phosphoprotein</keyword>
<keyword id="KW-1267">Proteomics identification</keyword>
<keyword id="KW-1185">Reference proteome</keyword>
<keyword id="KW-0677">Repeat</keyword>
<keyword id="KW-0804">Transcription</keyword>
<keyword id="KW-0805">Transcription regulation</keyword>
<keyword id="KW-0832">Ubl conjugation</keyword>
<keyword id="KW-0862">Zinc</keyword>
<keyword id="KW-0863">Zinc-finger</keyword>